<sequence>MMSRTESRYSSQRTWLLSMVVLAALWSISVQRATARVINDDCPNLIGNRDLYKRVEWICEDCSNIFRNTGMATLCRKNCFFNEDFLWCVYATERTEEMSQLRQWVGILGAGRE</sequence>
<evidence type="ECO:0000250" key="1"/>
<evidence type="ECO:0000305" key="2"/>
<accession>O61389</accession>
<organism>
    <name type="scientific">Metacarcinus magister</name>
    <name type="common">Dungeness crab</name>
    <name type="synonym">Cancer magister</name>
    <dbReference type="NCBI Taxonomy" id="29965"/>
    <lineage>
        <taxon>Eukaryota</taxon>
        <taxon>Metazoa</taxon>
        <taxon>Ecdysozoa</taxon>
        <taxon>Arthropoda</taxon>
        <taxon>Crustacea</taxon>
        <taxon>Multicrustacea</taxon>
        <taxon>Malacostraca</taxon>
        <taxon>Eumalacostraca</taxon>
        <taxon>Eucarida</taxon>
        <taxon>Decapoda</taxon>
        <taxon>Pleocyemata</taxon>
        <taxon>Brachyura</taxon>
        <taxon>Eubrachyura</taxon>
        <taxon>Cancroidea</taxon>
        <taxon>Cancridae</taxon>
        <taxon>Metacarcinus</taxon>
    </lineage>
</organism>
<reference key="1">
    <citation type="journal article" date="1998" name="Mol. Cell. Endocrinol.">
        <title>Molecular cloning of a cDNA encoding molt-inhibiting hormone of the crab, Cancer magister.</title>
        <authorList>
            <person name="Umphrey H.R."/>
            <person name="Lee K.J."/>
            <person name="Watson R.D."/>
            <person name="Spaziani E."/>
        </authorList>
    </citation>
    <scope>NUCLEOTIDE SEQUENCE [MRNA]</scope>
    <source>
        <tissue>Eyestalk</tissue>
    </source>
</reference>
<comment type="function">
    <text evidence="1">Inhibits Y-organs where molting hormone (ecdysteroid) is secreted. A molting cycle is initiated when MIH secretion diminishes or stops (By similarity).</text>
</comment>
<comment type="subcellular location">
    <subcellularLocation>
        <location>Secreted</location>
    </subcellularLocation>
</comment>
<comment type="similarity">
    <text evidence="2">Belongs to the arthropod CHH/MIH/GIH/VIH hormone family.</text>
</comment>
<feature type="signal peptide" evidence="1">
    <location>
        <begin position="1"/>
        <end position="35"/>
    </location>
</feature>
<feature type="peptide" id="PRO_0000019077" description="Molt-inhibiting hormone">
    <location>
        <begin position="36"/>
        <end position="113"/>
    </location>
</feature>
<feature type="disulfide bond" evidence="1">
    <location>
        <begin position="42"/>
        <end position="79"/>
    </location>
</feature>
<feature type="disulfide bond" evidence="1">
    <location>
        <begin position="59"/>
        <end position="75"/>
    </location>
</feature>
<feature type="disulfide bond" evidence="1">
    <location>
        <begin position="62"/>
        <end position="88"/>
    </location>
</feature>
<keyword id="KW-1015">Disulfide bond</keyword>
<keyword id="KW-0372">Hormone</keyword>
<keyword id="KW-0527">Neuropeptide</keyword>
<keyword id="KW-0964">Secreted</keyword>
<keyword id="KW-0732">Signal</keyword>
<name>MIH_METMG</name>
<dbReference type="EMBL" id="AF031493">
    <property type="protein sequence ID" value="AAC38984.1"/>
    <property type="molecule type" value="mRNA"/>
</dbReference>
<dbReference type="SMR" id="O61389"/>
<dbReference type="GO" id="GO:0005576">
    <property type="term" value="C:extracellular region"/>
    <property type="evidence" value="ECO:0007669"/>
    <property type="project" value="UniProtKB-SubCell"/>
</dbReference>
<dbReference type="GO" id="GO:0005184">
    <property type="term" value="F:neuropeptide hormone activity"/>
    <property type="evidence" value="ECO:0007669"/>
    <property type="project" value="InterPro"/>
</dbReference>
<dbReference type="GO" id="GO:0007623">
    <property type="term" value="P:circadian rhythm"/>
    <property type="evidence" value="ECO:0007669"/>
    <property type="project" value="TreeGrafter"/>
</dbReference>
<dbReference type="GO" id="GO:0007218">
    <property type="term" value="P:neuropeptide signaling pathway"/>
    <property type="evidence" value="ECO:0007669"/>
    <property type="project" value="UniProtKB-KW"/>
</dbReference>
<dbReference type="Gene3D" id="1.10.2010.10">
    <property type="entry name" value="Crustacean CHH/MIH/GIH neurohormone"/>
    <property type="match status" value="1"/>
</dbReference>
<dbReference type="InterPro" id="IPR018251">
    <property type="entry name" value="Crust_neurhormone_CS"/>
</dbReference>
<dbReference type="InterPro" id="IPR031098">
    <property type="entry name" value="Crust_neurohorm"/>
</dbReference>
<dbReference type="InterPro" id="IPR035957">
    <property type="entry name" value="Crust_neurohorm_sf"/>
</dbReference>
<dbReference type="InterPro" id="IPR001166">
    <property type="entry name" value="Hyperglycemic"/>
</dbReference>
<dbReference type="InterPro" id="IPR001262">
    <property type="entry name" value="Hyperglycemic2"/>
</dbReference>
<dbReference type="PANTHER" id="PTHR35981">
    <property type="entry name" value="ION TRANSPORT PEPTIDE, ISOFORM C"/>
    <property type="match status" value="1"/>
</dbReference>
<dbReference type="PANTHER" id="PTHR35981:SF2">
    <property type="entry name" value="ION TRANSPORT PEPTIDE, ISOFORM C"/>
    <property type="match status" value="1"/>
</dbReference>
<dbReference type="Pfam" id="PF01147">
    <property type="entry name" value="Crust_neurohorm"/>
    <property type="match status" value="1"/>
</dbReference>
<dbReference type="PRINTS" id="PR00549">
    <property type="entry name" value="HYPRGLYCEMC2"/>
</dbReference>
<dbReference type="PRINTS" id="PR00550">
    <property type="entry name" value="HYPRGLYCEMIC"/>
</dbReference>
<dbReference type="SUPFAM" id="SSF81778">
    <property type="entry name" value="Crustacean CHH/MIH/GIH neurohormone"/>
    <property type="match status" value="1"/>
</dbReference>
<dbReference type="PROSITE" id="PS01250">
    <property type="entry name" value="CHH_MIH_GIH"/>
    <property type="match status" value="1"/>
</dbReference>
<protein>
    <recommendedName>
        <fullName>Molt-inhibiting hormone</fullName>
        <shortName>MIH</shortName>
    </recommendedName>
</protein>
<proteinExistence type="inferred from homology"/>